<reference key="1">
    <citation type="journal article" date="2005" name="Nature">
        <title>The map-based sequence of the rice genome.</title>
        <authorList>
            <consortium name="International rice genome sequencing project (IRGSP)"/>
        </authorList>
    </citation>
    <scope>NUCLEOTIDE SEQUENCE [LARGE SCALE GENOMIC DNA]</scope>
    <source>
        <strain>cv. Nipponbare</strain>
    </source>
</reference>
<reference key="2">
    <citation type="journal article" date="2008" name="Nucleic Acids Res.">
        <title>The rice annotation project database (RAP-DB): 2008 update.</title>
        <authorList>
            <consortium name="The rice annotation project (RAP)"/>
        </authorList>
    </citation>
    <scope>GENOME REANNOTATION</scope>
    <source>
        <strain>cv. Nipponbare</strain>
    </source>
</reference>
<reference key="3">
    <citation type="journal article" date="2013" name="Rice">
        <title>Improvement of the Oryza sativa Nipponbare reference genome using next generation sequence and optical map data.</title>
        <authorList>
            <person name="Kawahara Y."/>
            <person name="de la Bastide M."/>
            <person name="Hamilton J.P."/>
            <person name="Kanamori H."/>
            <person name="McCombie W.R."/>
            <person name="Ouyang S."/>
            <person name="Schwartz D.C."/>
            <person name="Tanaka T."/>
            <person name="Wu J."/>
            <person name="Zhou S."/>
            <person name="Childs K.L."/>
            <person name="Davidson R.M."/>
            <person name="Lin H."/>
            <person name="Quesada-Ocampo L."/>
            <person name="Vaillancourt B."/>
            <person name="Sakai H."/>
            <person name="Lee S.S."/>
            <person name="Kim J."/>
            <person name="Numa H."/>
            <person name="Itoh T."/>
            <person name="Buell C.R."/>
            <person name="Matsumoto T."/>
        </authorList>
    </citation>
    <scope>GENOME REANNOTATION</scope>
    <source>
        <strain>cv. Nipponbare</strain>
    </source>
</reference>
<reference key="4">
    <citation type="journal article" date="2003" name="Science">
        <title>Collection, mapping, and annotation of over 28,000 cDNA clones from japonica rice.</title>
        <authorList>
            <consortium name="The rice full-length cDNA consortium"/>
        </authorList>
    </citation>
    <scope>NUCLEOTIDE SEQUENCE [LARGE SCALE MRNA]</scope>
    <source>
        <strain>cv. Nipponbare</strain>
    </source>
</reference>
<reference key="5">
    <citation type="journal article" date="2010" name="Plant Mol. Biol.">
        <title>Functional and composition differences between mitochondrial complex II in Arabidopsis and rice are correlated with the complex genetic history of the enzyme.</title>
        <authorList>
            <person name="Huang S."/>
            <person name="Taylor N.L."/>
            <person name="Narsai R."/>
            <person name="Eubel H."/>
            <person name="Whelan J."/>
            <person name="Millar A.H."/>
        </authorList>
    </citation>
    <scope>IDENTIFICATION BY MASS SPECTROMETRY</scope>
    <scope>SUBUNIT</scope>
</reference>
<comment type="function">
    <text evidence="2">Flavoprotein (FP) subunit of succinate dehydrogenase (SDH) that is involved in complex II of the mitochondrial electron transport chain and is responsible for transferring electrons from succinate to ubiquinone (coenzyme Q).</text>
</comment>
<comment type="catalytic activity">
    <reaction evidence="2">
        <text>a quinone + succinate = fumarate + a quinol</text>
        <dbReference type="Rhea" id="RHEA:40523"/>
        <dbReference type="ChEBI" id="CHEBI:24646"/>
        <dbReference type="ChEBI" id="CHEBI:29806"/>
        <dbReference type="ChEBI" id="CHEBI:30031"/>
        <dbReference type="ChEBI" id="CHEBI:132124"/>
        <dbReference type="EC" id="1.3.5.1"/>
    </reaction>
</comment>
<comment type="cofactor">
    <cofactor evidence="3">
        <name>FAD</name>
        <dbReference type="ChEBI" id="CHEBI:57692"/>
    </cofactor>
</comment>
<comment type="pathway">
    <text evidence="2">Carbohydrate metabolism; tricarboxylic acid cycle; fumarate from succinate (eukaryal route): step 1/1.</text>
</comment>
<comment type="subunit">
    <text evidence="6">Component of complex II composed of eight subunits in plants: four classical SDH subunits SDH1, SDH2, SDH3 and SDH4 (a flavoprotein (FP), an iron-sulfur protein (IP), and a cytochrome b composed of a large and a small subunit.), as well as four subunits unknown in mitochondria from bacteria and heterotrophic eukaryotes.</text>
</comment>
<comment type="subcellular location">
    <subcellularLocation>
        <location evidence="1">Mitochondrion inner membrane</location>
        <topology evidence="1">Peripheral membrane protein</topology>
        <orientation evidence="1">Matrix side</orientation>
    </subcellularLocation>
</comment>
<comment type="similarity">
    <text evidence="7">Belongs to the FAD-dependent oxidoreductase 2 family. FRD/SDH subfamily.</text>
</comment>
<sequence>MWRGCVSRGLRSLSKGKGSSSSAPVSAAARLFSTASSSYTVVDHSYDAVVVGAGGAGLRAAIGLSEHGFNTACITKLFPTRSHTVAAQGGINAALGNMTEDDWRWHMYDTVKGSDWLGDQDSIQYMCREAPKAVIELENYGLPFSRTEDGKIYQRAFGGQSLDFGKGGQAYRCACAADRTGHAMLHTLYGQAMKHNTQFFVEYFALDLIMDSEGTCQGVIALNMEDGTLHRFRATNTILATGGYGRAYFSATSAHTCTGDGNAMVARAGLPLQDLEFVQFHPTGIYGAGCLITEGSRGEGGILRNSEGERFMERYAPTAKDLASRDVVSRSMTMEIREGRGVGPLKDHIYLHLNHLPPEVLKERLPGISETAAIFAGVDVTKEPIPVLPTVHYNMGGIPTNYHGEVVTMKGDNPDSVVPGLMAAGEAACASVHGANRLGANSLLDIVVFGRACANRVAETAKPGEKQKPLQKSAGEKTIAWLDKLRNANGSLPTSKIRLNMQRVMQNNAAVFRTQETLEEGCKLITKAWESYHDVKISDRSLIWNSDLIETIELENLLINACITMHSAEARKESRGAHAREDFTKRDDEQWMKHSLGYWENEKVRLAYRPVHMNTLDSEVESFPPKARVY</sequence>
<dbReference type="EC" id="1.3.5.1" evidence="2"/>
<dbReference type="EMBL" id="AP004338">
    <property type="protein sequence ID" value="BAC83515.1"/>
    <property type="molecule type" value="Genomic_DNA"/>
</dbReference>
<dbReference type="EMBL" id="AP008213">
    <property type="protein sequence ID" value="BAF20759.1"/>
    <property type="molecule type" value="Genomic_DNA"/>
</dbReference>
<dbReference type="EMBL" id="AP014963">
    <property type="protein sequence ID" value="BAS99963.1"/>
    <property type="molecule type" value="Genomic_DNA"/>
</dbReference>
<dbReference type="EMBL" id="AK065901">
    <property type="protein sequence ID" value="BAG89728.1"/>
    <property type="molecule type" value="mRNA"/>
</dbReference>
<dbReference type="RefSeq" id="XP_015646992.1">
    <property type="nucleotide sequence ID" value="XM_015791506.1"/>
</dbReference>
<dbReference type="SMR" id="Q6ZDY8"/>
<dbReference type="FunCoup" id="Q6ZDY8">
    <property type="interactions" value="2344"/>
</dbReference>
<dbReference type="STRING" id="39947.Q6ZDY8"/>
<dbReference type="PaxDb" id="39947-Q6ZDY8"/>
<dbReference type="EnsemblPlants" id="Os07t0134800-01">
    <property type="protein sequence ID" value="Os07t0134800-01"/>
    <property type="gene ID" value="Os07g0134800"/>
</dbReference>
<dbReference type="Gramene" id="Os07t0134800-01">
    <property type="protein sequence ID" value="Os07t0134800-01"/>
    <property type="gene ID" value="Os07g0134800"/>
</dbReference>
<dbReference type="KEGG" id="dosa:Os07g0134800"/>
<dbReference type="eggNOG" id="KOG2403">
    <property type="taxonomic scope" value="Eukaryota"/>
</dbReference>
<dbReference type="HOGENOM" id="CLU_014312_6_1_1"/>
<dbReference type="InParanoid" id="Q6ZDY8"/>
<dbReference type="OMA" id="PTGIWRM"/>
<dbReference type="OrthoDB" id="71672at2759"/>
<dbReference type="PlantReactome" id="R-OSA-1119533">
    <property type="pathway name" value="TCA cycle (plant)"/>
</dbReference>
<dbReference type="UniPathway" id="UPA00223">
    <property type="reaction ID" value="UER01006"/>
</dbReference>
<dbReference type="Proteomes" id="UP000000763">
    <property type="component" value="Chromosome 7"/>
</dbReference>
<dbReference type="Proteomes" id="UP000059680">
    <property type="component" value="Chromosome 7"/>
</dbReference>
<dbReference type="ExpressionAtlas" id="Q6ZDY8">
    <property type="expression patterns" value="baseline and differential"/>
</dbReference>
<dbReference type="GO" id="GO:0005743">
    <property type="term" value="C:mitochondrial inner membrane"/>
    <property type="evidence" value="ECO:0007669"/>
    <property type="project" value="UniProtKB-SubCell"/>
</dbReference>
<dbReference type="GO" id="GO:0045273">
    <property type="term" value="C:respiratory chain complex II (succinate dehydrogenase)"/>
    <property type="evidence" value="ECO:0000314"/>
    <property type="project" value="UniProtKB"/>
</dbReference>
<dbReference type="GO" id="GO:0009055">
    <property type="term" value="F:electron transfer activity"/>
    <property type="evidence" value="ECO:0000318"/>
    <property type="project" value="GO_Central"/>
</dbReference>
<dbReference type="GO" id="GO:0050660">
    <property type="term" value="F:flavin adenine dinucleotide binding"/>
    <property type="evidence" value="ECO:0000318"/>
    <property type="project" value="GO_Central"/>
</dbReference>
<dbReference type="GO" id="GO:0008177">
    <property type="term" value="F:succinate dehydrogenase (quinone) activity"/>
    <property type="evidence" value="ECO:0000318"/>
    <property type="project" value="GO_Central"/>
</dbReference>
<dbReference type="GO" id="GO:0006121">
    <property type="term" value="P:mitochondrial electron transport, succinate to ubiquinone"/>
    <property type="evidence" value="ECO:0000318"/>
    <property type="project" value="GO_Central"/>
</dbReference>
<dbReference type="GO" id="GO:0006099">
    <property type="term" value="P:tricarboxylic acid cycle"/>
    <property type="evidence" value="ECO:0007669"/>
    <property type="project" value="UniProtKB-UniPathway"/>
</dbReference>
<dbReference type="FunFam" id="3.90.700.10:FF:000001">
    <property type="entry name" value="Mitochondrial succinate dehydrogenase flavoprotein subunit"/>
    <property type="match status" value="1"/>
</dbReference>
<dbReference type="FunFam" id="3.50.50.60:FF:000405">
    <property type="entry name" value="Succinate dehydrogenase [ubiquinone] flavoprotein subunit, mitochondrial"/>
    <property type="match status" value="1"/>
</dbReference>
<dbReference type="FunFam" id="4.10.80.40:FF:000002">
    <property type="entry name" value="Succinate dehydrogenase [ubiquinone] flavoprotein subunit, mitochondrial"/>
    <property type="match status" value="1"/>
</dbReference>
<dbReference type="FunFam" id="3.50.50.60:FF:000482">
    <property type="entry name" value="Succinate dehydrogenase complex, subunit A, flavoprotein (Fp)"/>
    <property type="match status" value="1"/>
</dbReference>
<dbReference type="FunFam" id="1.20.58.100:FF:000001">
    <property type="entry name" value="Succinate dehydrogenase flavoprotein subunit (SdhA)"/>
    <property type="match status" value="1"/>
</dbReference>
<dbReference type="Gene3D" id="3.50.50.60">
    <property type="entry name" value="FAD/NAD(P)-binding domain"/>
    <property type="match status" value="1"/>
</dbReference>
<dbReference type="Gene3D" id="1.20.58.100">
    <property type="entry name" value="Fumarate reductase/succinate dehydrogenase flavoprotein-like, C-terminal domain"/>
    <property type="match status" value="1"/>
</dbReference>
<dbReference type="Gene3D" id="4.10.80.40">
    <property type="entry name" value="succinate dehydrogenase protein domain"/>
    <property type="match status" value="1"/>
</dbReference>
<dbReference type="Gene3D" id="3.90.700.10">
    <property type="entry name" value="Succinate dehydrogenase/fumarate reductase flavoprotein, catalytic domain"/>
    <property type="match status" value="1"/>
</dbReference>
<dbReference type="InterPro" id="IPR003953">
    <property type="entry name" value="FAD-dep_OxRdtase_2_FAD-bd"/>
</dbReference>
<dbReference type="InterPro" id="IPR036188">
    <property type="entry name" value="FAD/NAD-bd_sf"/>
</dbReference>
<dbReference type="InterPro" id="IPR003952">
    <property type="entry name" value="FRD_SDH_FAD_BS"/>
</dbReference>
<dbReference type="InterPro" id="IPR037099">
    <property type="entry name" value="Fum_R/Succ_DH_flav-like_C_sf"/>
</dbReference>
<dbReference type="InterPro" id="IPR015939">
    <property type="entry name" value="Fum_Rdtase/Succ_DH_flav-like_C"/>
</dbReference>
<dbReference type="InterPro" id="IPR030664">
    <property type="entry name" value="SdhA/FrdA/AprA"/>
</dbReference>
<dbReference type="InterPro" id="IPR027477">
    <property type="entry name" value="Succ_DH/fumarate_Rdtase_cat_sf"/>
</dbReference>
<dbReference type="InterPro" id="IPR011281">
    <property type="entry name" value="Succ_DH_flav_su_fwd"/>
</dbReference>
<dbReference type="InterPro" id="IPR014006">
    <property type="entry name" value="Succ_Dhase_FrdA_Gneg"/>
</dbReference>
<dbReference type="NCBIfam" id="TIGR01816">
    <property type="entry name" value="sdhA_forward"/>
    <property type="match status" value="1"/>
</dbReference>
<dbReference type="NCBIfam" id="TIGR01812">
    <property type="entry name" value="sdhA_frdA_Gneg"/>
    <property type="match status" value="1"/>
</dbReference>
<dbReference type="PANTHER" id="PTHR11632">
    <property type="entry name" value="SUCCINATE DEHYDROGENASE 2 FLAVOPROTEIN SUBUNIT"/>
    <property type="match status" value="1"/>
</dbReference>
<dbReference type="PANTHER" id="PTHR11632:SF51">
    <property type="entry name" value="SUCCINATE DEHYDROGENASE [UBIQUINONE] FLAVOPROTEIN SUBUNIT, MITOCHONDRIAL"/>
    <property type="match status" value="1"/>
</dbReference>
<dbReference type="Pfam" id="PF00890">
    <property type="entry name" value="FAD_binding_2"/>
    <property type="match status" value="1"/>
</dbReference>
<dbReference type="Pfam" id="PF02910">
    <property type="entry name" value="Succ_DH_flav_C"/>
    <property type="match status" value="1"/>
</dbReference>
<dbReference type="PIRSF" id="PIRSF000171">
    <property type="entry name" value="SDHA_APRA_LASPO"/>
    <property type="match status" value="1"/>
</dbReference>
<dbReference type="SUPFAM" id="SSF51905">
    <property type="entry name" value="FAD/NAD(P)-binding domain"/>
    <property type="match status" value="1"/>
</dbReference>
<dbReference type="SUPFAM" id="SSF46977">
    <property type="entry name" value="Succinate dehydrogenase/fumarate reductase flavoprotein C-terminal domain"/>
    <property type="match status" value="1"/>
</dbReference>
<dbReference type="SUPFAM" id="SSF56425">
    <property type="entry name" value="Succinate dehydrogenase/fumarate reductase flavoprotein, catalytic domain"/>
    <property type="match status" value="1"/>
</dbReference>
<dbReference type="PROSITE" id="PS00504">
    <property type="entry name" value="FRD_SDH_FAD_BINDING"/>
    <property type="match status" value="1"/>
</dbReference>
<feature type="transit peptide" description="Mitochondrion" evidence="5">
    <location>
        <begin position="1"/>
        <end position="31"/>
    </location>
</feature>
<feature type="chain" id="PRO_0000247593" description="Succinate dehydrogenase [ubiquinone] flavoprotein subunit, mitochondrial">
    <location>
        <begin position="32"/>
        <end position="630"/>
    </location>
</feature>
<feature type="active site" description="Proton acceptor" evidence="4">
    <location>
        <position position="325"/>
    </location>
</feature>
<feature type="binding site" evidence="4">
    <location>
        <begin position="52"/>
        <end position="57"/>
    </location>
    <ligand>
        <name>FAD</name>
        <dbReference type="ChEBI" id="CHEBI:57692"/>
    </ligand>
</feature>
<feature type="binding site" evidence="4">
    <location>
        <begin position="75"/>
        <end position="90"/>
    </location>
    <ligand>
        <name>FAD</name>
        <dbReference type="ChEBI" id="CHEBI:57692"/>
    </ligand>
</feature>
<feature type="binding site" evidence="4">
    <location>
        <position position="260"/>
    </location>
    <ligand>
        <name>FAD</name>
        <dbReference type="ChEBI" id="CHEBI:57692"/>
    </ligand>
</feature>
<feature type="binding site" evidence="4">
    <location>
        <position position="281"/>
    </location>
    <ligand>
        <name>substrate</name>
    </ligand>
</feature>
<feature type="binding site" evidence="4">
    <location>
        <position position="293"/>
    </location>
    <ligand>
        <name>substrate</name>
    </ligand>
</feature>
<feature type="binding site" evidence="4">
    <location>
        <position position="392"/>
    </location>
    <ligand>
        <name>substrate</name>
    </ligand>
</feature>
<feature type="binding site" evidence="4">
    <location>
        <position position="426"/>
    </location>
    <ligand>
        <name>FAD</name>
        <dbReference type="ChEBI" id="CHEBI:57692"/>
    </ligand>
</feature>
<feature type="binding site" evidence="4">
    <location>
        <position position="437"/>
    </location>
    <ligand>
        <name>substrate</name>
    </ligand>
</feature>
<feature type="binding site" evidence="4">
    <location>
        <begin position="442"/>
        <end position="443"/>
    </location>
    <ligand>
        <name>FAD</name>
        <dbReference type="ChEBI" id="CHEBI:57692"/>
    </ligand>
</feature>
<feature type="modified residue" description="Tele-8alpha-FAD histidine" evidence="4">
    <location>
        <position position="83"/>
    </location>
</feature>
<gene>
    <name type="primary">SDH1</name>
    <name type="ordered locus">Os07g0134800</name>
    <name type="ordered locus">LOC_Os07g04240</name>
    <name type="ORF">P0507H12.27</name>
</gene>
<evidence type="ECO:0000250" key="1">
    <source>
        <dbReference type="UniProtKB" id="O82663"/>
    </source>
</evidence>
<evidence type="ECO:0000250" key="2">
    <source>
        <dbReference type="UniProtKB" id="P31040"/>
    </source>
</evidence>
<evidence type="ECO:0000250" key="3">
    <source>
        <dbReference type="UniProtKB" id="Q0QF01"/>
    </source>
</evidence>
<evidence type="ECO:0000250" key="4">
    <source>
        <dbReference type="UniProtKB" id="Q9YHT1"/>
    </source>
</evidence>
<evidence type="ECO:0000255" key="5"/>
<evidence type="ECO:0000269" key="6">
    <source>
    </source>
</evidence>
<evidence type="ECO:0000305" key="7"/>
<protein>
    <recommendedName>
        <fullName>Succinate dehydrogenase [ubiquinone] flavoprotein subunit, mitochondrial</fullName>
        <ecNumber evidence="2">1.3.5.1</ecNumber>
    </recommendedName>
    <alternativeName>
        <fullName>Flavoprotein subunit of complex II</fullName>
        <shortName>FP</shortName>
    </alternativeName>
</protein>
<proteinExistence type="evidence at protein level"/>
<accession>Q6ZDY8</accession>
<accession>A0A0P0X2R9</accession>
<accession>Q0D8R4</accession>
<name>SDHA_ORYSJ</name>
<organism>
    <name type="scientific">Oryza sativa subsp. japonica</name>
    <name type="common">Rice</name>
    <dbReference type="NCBI Taxonomy" id="39947"/>
    <lineage>
        <taxon>Eukaryota</taxon>
        <taxon>Viridiplantae</taxon>
        <taxon>Streptophyta</taxon>
        <taxon>Embryophyta</taxon>
        <taxon>Tracheophyta</taxon>
        <taxon>Spermatophyta</taxon>
        <taxon>Magnoliopsida</taxon>
        <taxon>Liliopsida</taxon>
        <taxon>Poales</taxon>
        <taxon>Poaceae</taxon>
        <taxon>BOP clade</taxon>
        <taxon>Oryzoideae</taxon>
        <taxon>Oryzeae</taxon>
        <taxon>Oryzinae</taxon>
        <taxon>Oryza</taxon>
        <taxon>Oryza sativa</taxon>
    </lineage>
</organism>
<keyword id="KW-0249">Electron transport</keyword>
<keyword id="KW-0274">FAD</keyword>
<keyword id="KW-0285">Flavoprotein</keyword>
<keyword id="KW-0472">Membrane</keyword>
<keyword id="KW-0496">Mitochondrion</keyword>
<keyword id="KW-0999">Mitochondrion inner membrane</keyword>
<keyword id="KW-0560">Oxidoreductase</keyword>
<keyword id="KW-1185">Reference proteome</keyword>
<keyword id="KW-0809">Transit peptide</keyword>
<keyword id="KW-0813">Transport</keyword>
<keyword id="KW-0816">Tricarboxylic acid cycle</keyword>